<name>WHIA_CALS8</name>
<dbReference type="EMBL" id="CP000679">
    <property type="protein sequence ID" value="ABP66767.1"/>
    <property type="molecule type" value="Genomic_DNA"/>
</dbReference>
<dbReference type="RefSeq" id="WP_011916706.1">
    <property type="nucleotide sequence ID" value="NC_009437.1"/>
</dbReference>
<dbReference type="SMR" id="A4XIN2"/>
<dbReference type="STRING" id="351627.Csac_1162"/>
<dbReference type="KEGG" id="csc:Csac_1162"/>
<dbReference type="eggNOG" id="COG1481">
    <property type="taxonomic scope" value="Bacteria"/>
</dbReference>
<dbReference type="HOGENOM" id="CLU_053282_0_0_9"/>
<dbReference type="OrthoDB" id="401278at2"/>
<dbReference type="Proteomes" id="UP000000256">
    <property type="component" value="Chromosome"/>
</dbReference>
<dbReference type="GO" id="GO:0003677">
    <property type="term" value="F:DNA binding"/>
    <property type="evidence" value="ECO:0007669"/>
    <property type="project" value="UniProtKB-UniRule"/>
</dbReference>
<dbReference type="GO" id="GO:0051301">
    <property type="term" value="P:cell division"/>
    <property type="evidence" value="ECO:0007669"/>
    <property type="project" value="UniProtKB-UniRule"/>
</dbReference>
<dbReference type="GO" id="GO:0043937">
    <property type="term" value="P:regulation of sporulation"/>
    <property type="evidence" value="ECO:0007669"/>
    <property type="project" value="InterPro"/>
</dbReference>
<dbReference type="Gene3D" id="3.10.28.10">
    <property type="entry name" value="Homing endonucleases"/>
    <property type="match status" value="1"/>
</dbReference>
<dbReference type="HAMAP" id="MF_01420">
    <property type="entry name" value="HTH_type_WhiA"/>
    <property type="match status" value="1"/>
</dbReference>
<dbReference type="InterPro" id="IPR027434">
    <property type="entry name" value="Homing_endonucl"/>
</dbReference>
<dbReference type="InterPro" id="IPR018478">
    <property type="entry name" value="Sporu_reg_WhiA_N_dom"/>
</dbReference>
<dbReference type="InterPro" id="IPR003802">
    <property type="entry name" value="Sporulation_regulator_WhiA"/>
</dbReference>
<dbReference type="InterPro" id="IPR023054">
    <property type="entry name" value="Sporulation_regulator_WhiA_C"/>
</dbReference>
<dbReference type="InterPro" id="IPR039518">
    <property type="entry name" value="WhiA_LAGLIDADG_dom"/>
</dbReference>
<dbReference type="NCBIfam" id="TIGR00647">
    <property type="entry name" value="DNA_bind_WhiA"/>
    <property type="match status" value="1"/>
</dbReference>
<dbReference type="PANTHER" id="PTHR37307">
    <property type="entry name" value="CELL DIVISION PROTEIN WHIA-RELATED"/>
    <property type="match status" value="1"/>
</dbReference>
<dbReference type="PANTHER" id="PTHR37307:SF1">
    <property type="entry name" value="CELL DIVISION PROTEIN WHIA-RELATED"/>
    <property type="match status" value="1"/>
</dbReference>
<dbReference type="Pfam" id="PF02650">
    <property type="entry name" value="HTH_WhiA"/>
    <property type="match status" value="1"/>
</dbReference>
<dbReference type="Pfam" id="PF14527">
    <property type="entry name" value="LAGLIDADG_WhiA"/>
    <property type="match status" value="1"/>
</dbReference>
<dbReference type="Pfam" id="PF10298">
    <property type="entry name" value="WhiA_N"/>
    <property type="match status" value="1"/>
</dbReference>
<dbReference type="SUPFAM" id="SSF55608">
    <property type="entry name" value="Homing endonucleases"/>
    <property type="match status" value="1"/>
</dbReference>
<sequence length="325" mass="37178">MSFSSSAKAEVSKKLLQTSCCRKAAIAAFLKFAGVIYKSEGIFSFKASFENAQTARAYFLLMKNGFSKHCEVTIKKNSKLNKNYVYTIILPPSTDNLQILKELHFVKKTSKEYILSFSLKEELVKKKCCKKAFLQATFLSCGSITNPEKMYHLEFDMKTKEDAEFLQKVLRSFEFEAKIVERKSHYVVYLKEGEQIVDFLNIIGAHAALLELENIRIVKELRNNVNRLVNCETANLEKTINASMRHIENIEFIEKTIGIDNLPENLREIARLRIKYKDASLKELGSMLKNPLGKSGVNHRLRKIDKIAEELRKGGILYAKPSDES</sequence>
<accession>A4XIN2</accession>
<keyword id="KW-0131">Cell cycle</keyword>
<keyword id="KW-0132">Cell division</keyword>
<keyword id="KW-0238">DNA-binding</keyword>
<gene>
    <name evidence="1" type="primary">whiA</name>
    <name type="ordered locus">Csac_1162</name>
</gene>
<protein>
    <recommendedName>
        <fullName evidence="1">Probable cell division protein WhiA</fullName>
    </recommendedName>
</protein>
<reference key="1">
    <citation type="submission" date="2007-04" db="EMBL/GenBank/DDBJ databases">
        <title>Genome sequence of the thermophilic hydrogen-producing bacterium Caldicellulosiruptor saccharolyticus DSM 8903.</title>
        <authorList>
            <person name="Copeland A."/>
            <person name="Lucas S."/>
            <person name="Lapidus A."/>
            <person name="Barry K."/>
            <person name="Detter J.C."/>
            <person name="Glavina del Rio T."/>
            <person name="Hammon N."/>
            <person name="Israni S."/>
            <person name="Dalin E."/>
            <person name="Tice H."/>
            <person name="Pitluck S."/>
            <person name="Kiss H."/>
            <person name="Brettin T."/>
            <person name="Bruce D."/>
            <person name="Han C."/>
            <person name="Schmutz J."/>
            <person name="Larimer F."/>
            <person name="Land M."/>
            <person name="Hauser L."/>
            <person name="Kyrpides N."/>
            <person name="Lykidis A."/>
            <person name="van de Werken H.J.G."/>
            <person name="Verhaart M.R.A."/>
            <person name="VanFossen A.L."/>
            <person name="Lewis D.L."/>
            <person name="Nichols J.D."/>
            <person name="Goorissen H.P."/>
            <person name="van Niel E.W.J."/>
            <person name="Stams F.J.M."/>
            <person name="Willquist K.U."/>
            <person name="Ward D.E."/>
            <person name="van der Oost J."/>
            <person name="Kelly R.M."/>
            <person name="Kengen S.M.W."/>
            <person name="Richardson P."/>
        </authorList>
    </citation>
    <scope>NUCLEOTIDE SEQUENCE [LARGE SCALE GENOMIC DNA]</scope>
    <source>
        <strain>ATCC 43494 / DSM 8903 / Tp8T 6331</strain>
    </source>
</reference>
<feature type="chain" id="PRO_0000376451" description="Probable cell division protein WhiA">
    <location>
        <begin position="1"/>
        <end position="325"/>
    </location>
</feature>
<feature type="DNA-binding region" description="H-T-H motif" evidence="1">
    <location>
        <begin position="280"/>
        <end position="313"/>
    </location>
</feature>
<comment type="function">
    <text evidence="1">Involved in cell division and chromosome segregation.</text>
</comment>
<comment type="similarity">
    <text evidence="1">Belongs to the WhiA family.</text>
</comment>
<evidence type="ECO:0000255" key="1">
    <source>
        <dbReference type="HAMAP-Rule" id="MF_01420"/>
    </source>
</evidence>
<organism>
    <name type="scientific">Caldicellulosiruptor saccharolyticus (strain ATCC 43494 / DSM 8903 / Tp8T 6331)</name>
    <dbReference type="NCBI Taxonomy" id="351627"/>
    <lineage>
        <taxon>Bacteria</taxon>
        <taxon>Bacillati</taxon>
        <taxon>Bacillota</taxon>
        <taxon>Bacillota incertae sedis</taxon>
        <taxon>Caldicellulosiruptorales</taxon>
        <taxon>Caldicellulosiruptoraceae</taxon>
        <taxon>Caldicellulosiruptor</taxon>
    </lineage>
</organism>
<proteinExistence type="inferred from homology"/>